<name>ISPG_BURP0</name>
<gene>
    <name evidence="1" type="primary">ispG</name>
    <name type="ordered locus">BURPS1106A_2228</name>
</gene>
<evidence type="ECO:0000255" key="1">
    <source>
        <dbReference type="HAMAP-Rule" id="MF_00159"/>
    </source>
</evidence>
<feature type="chain" id="PRO_1000011449" description="4-hydroxy-3-methylbut-2-en-1-yl diphosphate synthase (flavodoxin)">
    <location>
        <begin position="1"/>
        <end position="416"/>
    </location>
</feature>
<feature type="binding site" evidence="1">
    <location>
        <position position="304"/>
    </location>
    <ligand>
        <name>[4Fe-4S] cluster</name>
        <dbReference type="ChEBI" id="CHEBI:49883"/>
    </ligand>
</feature>
<feature type="binding site" evidence="1">
    <location>
        <position position="307"/>
    </location>
    <ligand>
        <name>[4Fe-4S] cluster</name>
        <dbReference type="ChEBI" id="CHEBI:49883"/>
    </ligand>
</feature>
<feature type="binding site" evidence="1">
    <location>
        <position position="350"/>
    </location>
    <ligand>
        <name>[4Fe-4S] cluster</name>
        <dbReference type="ChEBI" id="CHEBI:49883"/>
    </ligand>
</feature>
<feature type="binding site" evidence="1">
    <location>
        <position position="357"/>
    </location>
    <ligand>
        <name>[4Fe-4S] cluster</name>
        <dbReference type="ChEBI" id="CHEBI:49883"/>
    </ligand>
</feature>
<organism>
    <name type="scientific">Burkholderia pseudomallei (strain 1106a)</name>
    <dbReference type="NCBI Taxonomy" id="357348"/>
    <lineage>
        <taxon>Bacteria</taxon>
        <taxon>Pseudomonadati</taxon>
        <taxon>Pseudomonadota</taxon>
        <taxon>Betaproteobacteria</taxon>
        <taxon>Burkholderiales</taxon>
        <taxon>Burkholderiaceae</taxon>
        <taxon>Burkholderia</taxon>
        <taxon>pseudomallei group</taxon>
    </lineage>
</organism>
<dbReference type="EC" id="1.17.7.3" evidence="1"/>
<dbReference type="EMBL" id="CP000572">
    <property type="protein sequence ID" value="ABN89393.1"/>
    <property type="molecule type" value="Genomic_DNA"/>
</dbReference>
<dbReference type="SMR" id="A3NVX1"/>
<dbReference type="KEGG" id="bpl:BURPS1106A_2228"/>
<dbReference type="HOGENOM" id="CLU_042258_1_0_4"/>
<dbReference type="UniPathway" id="UPA00056">
    <property type="reaction ID" value="UER00096"/>
</dbReference>
<dbReference type="Proteomes" id="UP000006738">
    <property type="component" value="Chromosome I"/>
</dbReference>
<dbReference type="GO" id="GO:0051539">
    <property type="term" value="F:4 iron, 4 sulfur cluster binding"/>
    <property type="evidence" value="ECO:0007669"/>
    <property type="project" value="UniProtKB-UniRule"/>
</dbReference>
<dbReference type="GO" id="GO:0046429">
    <property type="term" value="F:4-hydroxy-3-methylbut-2-en-1-yl diphosphate synthase activity (ferredoxin)"/>
    <property type="evidence" value="ECO:0007669"/>
    <property type="project" value="UniProtKB-UniRule"/>
</dbReference>
<dbReference type="GO" id="GO:0141197">
    <property type="term" value="F:4-hydroxy-3-methylbut-2-enyl-diphosphate synthase activity (flavodoxin)"/>
    <property type="evidence" value="ECO:0007669"/>
    <property type="project" value="UniProtKB-EC"/>
</dbReference>
<dbReference type="GO" id="GO:0005506">
    <property type="term" value="F:iron ion binding"/>
    <property type="evidence" value="ECO:0007669"/>
    <property type="project" value="InterPro"/>
</dbReference>
<dbReference type="GO" id="GO:0019288">
    <property type="term" value="P:isopentenyl diphosphate biosynthetic process, methylerythritol 4-phosphate pathway"/>
    <property type="evidence" value="ECO:0007669"/>
    <property type="project" value="UniProtKB-UniRule"/>
</dbReference>
<dbReference type="GO" id="GO:0016114">
    <property type="term" value="P:terpenoid biosynthetic process"/>
    <property type="evidence" value="ECO:0007669"/>
    <property type="project" value="InterPro"/>
</dbReference>
<dbReference type="FunFam" id="3.30.413.10:FF:000012">
    <property type="entry name" value="4-hydroxy-3-methylbut-2-en-1-yl diphosphate synthase (flavodoxin)"/>
    <property type="match status" value="1"/>
</dbReference>
<dbReference type="Gene3D" id="3.20.20.20">
    <property type="entry name" value="Dihydropteroate synthase-like"/>
    <property type="match status" value="1"/>
</dbReference>
<dbReference type="Gene3D" id="3.30.413.10">
    <property type="entry name" value="Sulfite Reductase Hemoprotein, domain 1"/>
    <property type="match status" value="1"/>
</dbReference>
<dbReference type="HAMAP" id="MF_00159">
    <property type="entry name" value="IspG"/>
    <property type="match status" value="1"/>
</dbReference>
<dbReference type="InterPro" id="IPR011005">
    <property type="entry name" value="Dihydropteroate_synth-like_sf"/>
</dbReference>
<dbReference type="InterPro" id="IPR016425">
    <property type="entry name" value="IspG_bac"/>
</dbReference>
<dbReference type="InterPro" id="IPR004588">
    <property type="entry name" value="IspG_bac-typ"/>
</dbReference>
<dbReference type="InterPro" id="IPR045854">
    <property type="entry name" value="NO2/SO3_Rdtase_4Fe4S_sf"/>
</dbReference>
<dbReference type="NCBIfam" id="TIGR00612">
    <property type="entry name" value="ispG_gcpE"/>
    <property type="match status" value="1"/>
</dbReference>
<dbReference type="NCBIfam" id="NF001540">
    <property type="entry name" value="PRK00366.1"/>
    <property type="match status" value="1"/>
</dbReference>
<dbReference type="PANTHER" id="PTHR30454">
    <property type="entry name" value="4-HYDROXY-3-METHYLBUT-2-EN-1-YL DIPHOSPHATE SYNTHASE"/>
    <property type="match status" value="1"/>
</dbReference>
<dbReference type="PANTHER" id="PTHR30454:SF0">
    <property type="entry name" value="4-HYDROXY-3-METHYLBUT-2-EN-1-YL DIPHOSPHATE SYNTHASE (FERREDOXIN), CHLOROPLASTIC"/>
    <property type="match status" value="1"/>
</dbReference>
<dbReference type="Pfam" id="PF04551">
    <property type="entry name" value="GcpE"/>
    <property type="match status" value="1"/>
</dbReference>
<dbReference type="PIRSF" id="PIRSF004640">
    <property type="entry name" value="IspG"/>
    <property type="match status" value="1"/>
</dbReference>
<dbReference type="SUPFAM" id="SSF56014">
    <property type="entry name" value="Nitrite and sulphite reductase 4Fe-4S domain-like"/>
    <property type="match status" value="1"/>
</dbReference>
<sequence length="416" mass="44462">MFGGHAPRRVSHAVDVRWGGTLVTIGGAAPVRVQSMTNTDTADAIGTAIQVKELANAGSELVRITVNTPEAAAAVPAIREQLDRMGVTVPLVGDFHYNGHLLLRDYPDCAQALSKYRINPGNVGQGAKRDSQFAQMIEAAIKYDKPVRIGVNWGSLDQDLLARMMDENGARAEPWEAQSVMYEALIQSAIGSAERAVELGLGRDKIVLSCKVSGVQDLVAVYRELSRRCGFALHLGLTEAGMGSKGIVASTAAIGLLLQEGIGDTIRISLTPEPGAPRTGEVVVGQEILQTMGLRSFAPMVVACPGCGRTTSTLFQELALRIQTYLREQMPVWRSEYPGVEKMNVAVMGCIVNGPGESKHANIGISLPGSGENPAAPVFVDGEKVKTLRGEHIAEEFQQIVSDYVARTYGRAAAQN</sequence>
<keyword id="KW-0004">4Fe-4S</keyword>
<keyword id="KW-0408">Iron</keyword>
<keyword id="KW-0411">Iron-sulfur</keyword>
<keyword id="KW-0414">Isoprene biosynthesis</keyword>
<keyword id="KW-0479">Metal-binding</keyword>
<keyword id="KW-0560">Oxidoreductase</keyword>
<comment type="function">
    <text evidence="1">Converts 2C-methyl-D-erythritol 2,4-cyclodiphosphate (ME-2,4cPP) into 1-hydroxy-2-methyl-2-(E)-butenyl 4-diphosphate.</text>
</comment>
<comment type="catalytic activity">
    <reaction evidence="1">
        <text>(2E)-4-hydroxy-3-methylbut-2-enyl diphosphate + oxidized [flavodoxin] + H2O + 2 H(+) = 2-C-methyl-D-erythritol 2,4-cyclic diphosphate + reduced [flavodoxin]</text>
        <dbReference type="Rhea" id="RHEA:43604"/>
        <dbReference type="Rhea" id="RHEA-COMP:10622"/>
        <dbReference type="Rhea" id="RHEA-COMP:10623"/>
        <dbReference type="ChEBI" id="CHEBI:15377"/>
        <dbReference type="ChEBI" id="CHEBI:15378"/>
        <dbReference type="ChEBI" id="CHEBI:57618"/>
        <dbReference type="ChEBI" id="CHEBI:58210"/>
        <dbReference type="ChEBI" id="CHEBI:58483"/>
        <dbReference type="ChEBI" id="CHEBI:128753"/>
        <dbReference type="EC" id="1.17.7.3"/>
    </reaction>
</comment>
<comment type="cofactor">
    <cofactor evidence="1">
        <name>[4Fe-4S] cluster</name>
        <dbReference type="ChEBI" id="CHEBI:49883"/>
    </cofactor>
    <text evidence="1">Binds 1 [4Fe-4S] cluster.</text>
</comment>
<comment type="pathway">
    <text evidence="1">Isoprenoid biosynthesis; isopentenyl diphosphate biosynthesis via DXP pathway; isopentenyl diphosphate from 1-deoxy-D-xylulose 5-phosphate: step 5/6.</text>
</comment>
<comment type="similarity">
    <text evidence="1">Belongs to the IspG family.</text>
</comment>
<accession>A3NVX1</accession>
<reference key="1">
    <citation type="journal article" date="2010" name="Genome Biol. Evol.">
        <title>Continuing evolution of Burkholderia mallei through genome reduction and large-scale rearrangements.</title>
        <authorList>
            <person name="Losada L."/>
            <person name="Ronning C.M."/>
            <person name="DeShazer D."/>
            <person name="Woods D."/>
            <person name="Fedorova N."/>
            <person name="Kim H.S."/>
            <person name="Shabalina S.A."/>
            <person name="Pearson T.R."/>
            <person name="Brinkac L."/>
            <person name="Tan P."/>
            <person name="Nandi T."/>
            <person name="Crabtree J."/>
            <person name="Badger J."/>
            <person name="Beckstrom-Sternberg S."/>
            <person name="Saqib M."/>
            <person name="Schutzer S.E."/>
            <person name="Keim P."/>
            <person name="Nierman W.C."/>
        </authorList>
    </citation>
    <scope>NUCLEOTIDE SEQUENCE [LARGE SCALE GENOMIC DNA]</scope>
    <source>
        <strain>1106a</strain>
    </source>
</reference>
<proteinExistence type="inferred from homology"/>
<protein>
    <recommendedName>
        <fullName evidence="1">4-hydroxy-3-methylbut-2-en-1-yl diphosphate synthase (flavodoxin)</fullName>
        <ecNumber evidence="1">1.17.7.3</ecNumber>
    </recommendedName>
    <alternativeName>
        <fullName evidence="1">1-hydroxy-2-methyl-2-(E)-butenyl 4-diphosphate synthase</fullName>
    </alternativeName>
</protein>